<accession>Q864K0</accession>
<gene>
    <name type="primary">MC1R</name>
</gene>
<organism>
    <name type="scientific">Cercopithecus diana</name>
    <name type="common">Diana monkey</name>
    <dbReference type="NCBI Taxonomy" id="36224"/>
    <lineage>
        <taxon>Eukaryota</taxon>
        <taxon>Metazoa</taxon>
        <taxon>Chordata</taxon>
        <taxon>Craniata</taxon>
        <taxon>Vertebrata</taxon>
        <taxon>Euteleostomi</taxon>
        <taxon>Mammalia</taxon>
        <taxon>Eutheria</taxon>
        <taxon>Euarchontoglires</taxon>
        <taxon>Primates</taxon>
        <taxon>Haplorrhini</taxon>
        <taxon>Catarrhini</taxon>
        <taxon>Cercopithecidae</taxon>
        <taxon>Cercopithecinae</taxon>
        <taxon>Cercopithecus</taxon>
    </lineage>
</organism>
<evidence type="ECO:0000250" key="1">
    <source>
        <dbReference type="UniProtKB" id="Q01726"/>
    </source>
</evidence>
<evidence type="ECO:0000255" key="2"/>
<evidence type="ECO:0000255" key="3">
    <source>
        <dbReference type="PROSITE-ProRule" id="PRU00521"/>
    </source>
</evidence>
<feature type="chain" id="PRO_0000069804" description="Melanocyte-stimulating hormone receptor">
    <location>
        <begin position="1"/>
        <end position="317"/>
    </location>
</feature>
<feature type="topological domain" description="Extracellular" evidence="2">
    <location>
        <begin position="1"/>
        <end position="37"/>
    </location>
</feature>
<feature type="transmembrane region" description="Helical; Name=1" evidence="2">
    <location>
        <begin position="38"/>
        <end position="63"/>
    </location>
</feature>
<feature type="topological domain" description="Cytoplasmic" evidence="2">
    <location>
        <begin position="64"/>
        <end position="72"/>
    </location>
</feature>
<feature type="transmembrane region" description="Helical; Name=2" evidence="2">
    <location>
        <begin position="73"/>
        <end position="93"/>
    </location>
</feature>
<feature type="topological domain" description="Extracellular" evidence="2">
    <location>
        <begin position="94"/>
        <end position="118"/>
    </location>
</feature>
<feature type="transmembrane region" description="Helical; Name=3" evidence="2">
    <location>
        <begin position="119"/>
        <end position="140"/>
    </location>
</feature>
<feature type="topological domain" description="Cytoplasmic" evidence="2">
    <location>
        <begin position="141"/>
        <end position="163"/>
    </location>
</feature>
<feature type="transmembrane region" description="Helical; Name=4" evidence="2">
    <location>
        <begin position="164"/>
        <end position="183"/>
    </location>
</feature>
<feature type="topological domain" description="Extracellular" evidence="2">
    <location>
        <begin position="184"/>
        <end position="191"/>
    </location>
</feature>
<feature type="transmembrane region" description="Helical; Name=5" evidence="2">
    <location>
        <begin position="192"/>
        <end position="211"/>
    </location>
</feature>
<feature type="topological domain" description="Cytoplasmic" evidence="2">
    <location>
        <begin position="212"/>
        <end position="240"/>
    </location>
</feature>
<feature type="transmembrane region" description="Helical; Name=6" evidence="2">
    <location>
        <begin position="241"/>
        <end position="266"/>
    </location>
</feature>
<feature type="topological domain" description="Extracellular" evidence="2">
    <location>
        <begin position="267"/>
        <end position="279"/>
    </location>
</feature>
<feature type="transmembrane region" description="Helical; Name=7" evidence="2">
    <location>
        <begin position="280"/>
        <end position="300"/>
    </location>
</feature>
<feature type="topological domain" description="Cytoplasmic" evidence="2">
    <location>
        <begin position="301"/>
        <end position="317"/>
    </location>
</feature>
<feature type="lipid moiety-binding region" description="S-palmitoyl cysteine" evidence="2">
    <location>
        <position position="315"/>
    </location>
</feature>
<feature type="glycosylation site" description="N-linked (GlcNAc...) asparagine" evidence="2">
    <location>
        <position position="29"/>
    </location>
</feature>
<keyword id="KW-1003">Cell membrane</keyword>
<keyword id="KW-0297">G-protein coupled receptor</keyword>
<keyword id="KW-0325">Glycoprotein</keyword>
<keyword id="KW-0449">Lipoprotein</keyword>
<keyword id="KW-0472">Membrane</keyword>
<keyword id="KW-0564">Palmitate</keyword>
<keyword id="KW-0675">Receptor</keyword>
<keyword id="KW-0807">Transducer</keyword>
<keyword id="KW-0812">Transmembrane</keyword>
<keyword id="KW-1133">Transmembrane helix</keyword>
<reference key="1">
    <citation type="journal article" date="2003" name="Am. J. Phys. Anthropol.">
        <title>Evolution of a pigmentation gene, the melanocortin-1 receptor, in primates.</title>
        <authorList>
            <person name="Mundy N.I."/>
            <person name="Kelly J."/>
        </authorList>
    </citation>
    <scope>NUCLEOTIDE SEQUENCE [GENOMIC DNA]</scope>
    <source>
        <strain>Isolate 1</strain>
    </source>
</reference>
<proteinExistence type="inferred from homology"/>
<dbReference type="EMBL" id="AY205097">
    <property type="protein sequence ID" value="AAP30971.1"/>
    <property type="molecule type" value="Genomic_DNA"/>
</dbReference>
<dbReference type="SMR" id="Q864K0"/>
<dbReference type="GlyCosmos" id="Q864K0">
    <property type="glycosylation" value="1 site, No reported glycans"/>
</dbReference>
<dbReference type="GO" id="GO:0005886">
    <property type="term" value="C:plasma membrane"/>
    <property type="evidence" value="ECO:0000250"/>
    <property type="project" value="UniProtKB"/>
</dbReference>
<dbReference type="GO" id="GO:0004980">
    <property type="term" value="F:melanocyte-stimulating hormone receptor activity"/>
    <property type="evidence" value="ECO:0007669"/>
    <property type="project" value="InterPro"/>
</dbReference>
<dbReference type="GO" id="GO:0007189">
    <property type="term" value="P:adenylate cyclase-activating G protein-coupled receptor signaling pathway"/>
    <property type="evidence" value="ECO:0007669"/>
    <property type="project" value="UniProtKB-ARBA"/>
</dbReference>
<dbReference type="CDD" id="cd15351">
    <property type="entry name" value="7tmA_MC1R"/>
    <property type="match status" value="1"/>
</dbReference>
<dbReference type="FunFam" id="1.20.1070.10:FF:000211">
    <property type="entry name" value="Melanocyte-stimulating hormone receptor"/>
    <property type="match status" value="1"/>
</dbReference>
<dbReference type="Gene3D" id="1.20.1070.10">
    <property type="entry name" value="Rhodopsin 7-helix transmembrane proteins"/>
    <property type="match status" value="1"/>
</dbReference>
<dbReference type="InterPro" id="IPR000276">
    <property type="entry name" value="GPCR_Rhodpsn"/>
</dbReference>
<dbReference type="InterPro" id="IPR017452">
    <property type="entry name" value="GPCR_Rhodpsn_7TM"/>
</dbReference>
<dbReference type="InterPro" id="IPR001671">
    <property type="entry name" value="Melcrt_ACTH_rcpt"/>
</dbReference>
<dbReference type="InterPro" id="IPR000761">
    <property type="entry name" value="MSH_rcpt"/>
</dbReference>
<dbReference type="PANTHER" id="PTHR22750">
    <property type="entry name" value="G-PROTEIN COUPLED RECEPTOR"/>
    <property type="match status" value="1"/>
</dbReference>
<dbReference type="Pfam" id="PF00001">
    <property type="entry name" value="7tm_1"/>
    <property type="match status" value="1"/>
</dbReference>
<dbReference type="PRINTS" id="PR00237">
    <property type="entry name" value="GPCRRHODOPSN"/>
</dbReference>
<dbReference type="PRINTS" id="PR00534">
    <property type="entry name" value="MCRFAMILY"/>
</dbReference>
<dbReference type="PRINTS" id="PR00536">
    <property type="entry name" value="MELNOCYTESHR"/>
</dbReference>
<dbReference type="SMART" id="SM01381">
    <property type="entry name" value="7TM_GPCR_Srsx"/>
    <property type="match status" value="1"/>
</dbReference>
<dbReference type="SUPFAM" id="SSF81321">
    <property type="entry name" value="Family A G protein-coupled receptor-like"/>
    <property type="match status" value="1"/>
</dbReference>
<dbReference type="PROSITE" id="PS00237">
    <property type="entry name" value="G_PROTEIN_RECEP_F1_1"/>
    <property type="match status" value="1"/>
</dbReference>
<dbReference type="PROSITE" id="PS50262">
    <property type="entry name" value="G_PROTEIN_RECEP_F1_2"/>
    <property type="match status" value="1"/>
</dbReference>
<protein>
    <recommendedName>
        <fullName>Melanocyte-stimulating hormone receptor</fullName>
        <shortName>MSH-R</shortName>
    </recommendedName>
    <alternativeName>
        <fullName>Melanocortin receptor 1</fullName>
        <shortName>MC1-R</shortName>
    </alternativeName>
</protein>
<name>MSHR_CERDI</name>
<comment type="function">
    <text evidence="1">Receptor for MSH (alpha, beta and gamma) and ACTH. The activity of this receptor is mediated by G proteins which activate adenylate cyclase. Mediates melanogenesis, the production of eumelanin (black/brown) and phaeomelanin (red/yellow), via regulation of cAMP signaling in melanocytes.</text>
</comment>
<comment type="subunit">
    <text evidence="1">Interacts with MGRN1, but does not undergo MGRN1-mediated ubiquitination; this interaction competes with GNAS-binding and thus inhibits agonist-induced cAMP production. Interacts with OPN3; the interaction results in a decrease in MC1R-mediated cAMP signaling and ultimately a decrease in melanin production in melanocytes.</text>
</comment>
<comment type="subcellular location">
    <subcellularLocation>
        <location evidence="1">Cell membrane</location>
        <topology evidence="2">Multi-pass membrane protein</topology>
    </subcellularLocation>
</comment>
<comment type="similarity">
    <text evidence="3">Belongs to the G-protein coupled receptor 1 family.</text>
</comment>
<sequence length="317" mass="34815">MPVQGSQRRLLGSLNSTPTAPPHLGLAANQTGARCLEVSIPDGLFLSLGLVSLVENVLVVTAIAKNRNLHSPMYCFICCLALSDLLVSGSNMLETAVILLLEAGALAARAAVVQQLDNVIDVITCSSMLSSLCFLGAIAVDRYISIFYALRYHSIVTLPRARRAVAAIWVASVLFSMLFIAYYDHAAVLLCLVVFFLAMLVLMAVLYIHMLVRACQHAQGIARLHKRQRPAHQGFGLKGAATLTILLGIFFLCWGPFFLHLTLIVLCPQHPTCSCIFKNFNLFLALIICNAIIDPLIYAFRSQELRRTLKEVLLCSW</sequence>